<gene>
    <name type="ordered locus">Atu0781</name>
    <name type="ORF">AGR_C_1427</name>
</gene>
<organism>
    <name type="scientific">Agrobacterium fabrum (strain C58 / ATCC 33970)</name>
    <name type="common">Agrobacterium tumefaciens (strain C58)</name>
    <dbReference type="NCBI Taxonomy" id="176299"/>
    <lineage>
        <taxon>Bacteria</taxon>
        <taxon>Pseudomonadati</taxon>
        <taxon>Pseudomonadota</taxon>
        <taxon>Alphaproteobacteria</taxon>
        <taxon>Hyphomicrobiales</taxon>
        <taxon>Rhizobiaceae</taxon>
        <taxon>Rhizobium/Agrobacterium group</taxon>
        <taxon>Agrobacterium</taxon>
        <taxon>Agrobacterium tumefaciens complex</taxon>
    </lineage>
</organism>
<sequence length="201" mass="21916">MSFSTLMDKRERGSFDSQFLIAMPGLDDGNFARSVIYICAHSDAGAMGFIINRPQQITFTDILLHLKLVDSNDAIMLPNRTREFPIQCGGPVESGRGFVLHSDDYLSESSIPVSDDISLTATLDIVRAISNGRGPQKATMMLGYAGWGPGQLENEIANNGWLNCPAAEELIFDRGLDNKYERALALMGVDARMLSTDAGHA</sequence>
<proteinExistence type="inferred from homology"/>
<evidence type="ECO:0000255" key="1">
    <source>
        <dbReference type="HAMAP-Rule" id="MF_00758"/>
    </source>
</evidence>
<protein>
    <recommendedName>
        <fullName evidence="1">UPF0301 protein Atu0781</fullName>
    </recommendedName>
</protein>
<accession>Q8UHA2</accession>
<keyword id="KW-1185">Reference proteome</keyword>
<comment type="similarity">
    <text evidence="1">Belongs to the UPF0301 (AlgH) family.</text>
</comment>
<reference key="1">
    <citation type="journal article" date="2001" name="Science">
        <title>The genome of the natural genetic engineer Agrobacterium tumefaciens C58.</title>
        <authorList>
            <person name="Wood D.W."/>
            <person name="Setubal J.C."/>
            <person name="Kaul R."/>
            <person name="Monks D.E."/>
            <person name="Kitajima J.P."/>
            <person name="Okura V.K."/>
            <person name="Zhou Y."/>
            <person name="Chen L."/>
            <person name="Wood G.E."/>
            <person name="Almeida N.F. Jr."/>
            <person name="Woo L."/>
            <person name="Chen Y."/>
            <person name="Paulsen I.T."/>
            <person name="Eisen J.A."/>
            <person name="Karp P.D."/>
            <person name="Bovee D. Sr."/>
            <person name="Chapman P."/>
            <person name="Clendenning J."/>
            <person name="Deatherage G."/>
            <person name="Gillet W."/>
            <person name="Grant C."/>
            <person name="Kutyavin T."/>
            <person name="Levy R."/>
            <person name="Li M.-J."/>
            <person name="McClelland E."/>
            <person name="Palmieri A."/>
            <person name="Raymond C."/>
            <person name="Rouse G."/>
            <person name="Saenphimmachak C."/>
            <person name="Wu Z."/>
            <person name="Romero P."/>
            <person name="Gordon D."/>
            <person name="Zhang S."/>
            <person name="Yoo H."/>
            <person name="Tao Y."/>
            <person name="Biddle P."/>
            <person name="Jung M."/>
            <person name="Krespan W."/>
            <person name="Perry M."/>
            <person name="Gordon-Kamm B."/>
            <person name="Liao L."/>
            <person name="Kim S."/>
            <person name="Hendrick C."/>
            <person name="Zhao Z.-Y."/>
            <person name="Dolan M."/>
            <person name="Chumley F."/>
            <person name="Tingey S.V."/>
            <person name="Tomb J.-F."/>
            <person name="Gordon M.P."/>
            <person name="Olson M.V."/>
            <person name="Nester E.W."/>
        </authorList>
    </citation>
    <scope>NUCLEOTIDE SEQUENCE [LARGE SCALE GENOMIC DNA]</scope>
    <source>
        <strain>C58 / ATCC 33970</strain>
    </source>
</reference>
<reference key="2">
    <citation type="journal article" date="2001" name="Science">
        <title>Genome sequence of the plant pathogen and biotechnology agent Agrobacterium tumefaciens C58.</title>
        <authorList>
            <person name="Goodner B."/>
            <person name="Hinkle G."/>
            <person name="Gattung S."/>
            <person name="Miller N."/>
            <person name="Blanchard M."/>
            <person name="Qurollo B."/>
            <person name="Goldman B.S."/>
            <person name="Cao Y."/>
            <person name="Askenazi M."/>
            <person name="Halling C."/>
            <person name="Mullin L."/>
            <person name="Houmiel K."/>
            <person name="Gordon J."/>
            <person name="Vaudin M."/>
            <person name="Iartchouk O."/>
            <person name="Epp A."/>
            <person name="Liu F."/>
            <person name="Wollam C."/>
            <person name="Allinger M."/>
            <person name="Doughty D."/>
            <person name="Scott C."/>
            <person name="Lappas C."/>
            <person name="Markelz B."/>
            <person name="Flanagan C."/>
            <person name="Crowell C."/>
            <person name="Gurson J."/>
            <person name="Lomo C."/>
            <person name="Sear C."/>
            <person name="Strub G."/>
            <person name="Cielo C."/>
            <person name="Slater S."/>
        </authorList>
    </citation>
    <scope>NUCLEOTIDE SEQUENCE [LARGE SCALE GENOMIC DNA]</scope>
    <source>
        <strain>C58 / ATCC 33970</strain>
    </source>
</reference>
<dbReference type="EMBL" id="AE007869">
    <property type="protein sequence ID" value="AAK86590.2"/>
    <property type="molecule type" value="Genomic_DNA"/>
</dbReference>
<dbReference type="PIR" id="AG2672">
    <property type="entry name" value="AG2672"/>
</dbReference>
<dbReference type="PIR" id="E97454">
    <property type="entry name" value="E97454"/>
</dbReference>
<dbReference type="RefSeq" id="NP_353805.2">
    <property type="nucleotide sequence ID" value="NC_003062.2"/>
</dbReference>
<dbReference type="RefSeq" id="WP_010971144.1">
    <property type="nucleotide sequence ID" value="NC_003062.2"/>
</dbReference>
<dbReference type="SMR" id="Q8UHA2"/>
<dbReference type="STRING" id="176299.Atu0781"/>
<dbReference type="EnsemblBacteria" id="AAK86590">
    <property type="protein sequence ID" value="AAK86590"/>
    <property type="gene ID" value="Atu0781"/>
</dbReference>
<dbReference type="GeneID" id="1132819"/>
<dbReference type="KEGG" id="atu:Atu0781"/>
<dbReference type="PATRIC" id="fig|176299.10.peg.781"/>
<dbReference type="eggNOG" id="COG1678">
    <property type="taxonomic scope" value="Bacteria"/>
</dbReference>
<dbReference type="HOGENOM" id="CLU_057596_1_0_5"/>
<dbReference type="OrthoDB" id="9807486at2"/>
<dbReference type="PhylomeDB" id="Q8UHA2"/>
<dbReference type="BioCyc" id="AGRO:ATU0781-MONOMER"/>
<dbReference type="Proteomes" id="UP000000813">
    <property type="component" value="Chromosome circular"/>
</dbReference>
<dbReference type="GO" id="GO:0005829">
    <property type="term" value="C:cytosol"/>
    <property type="evidence" value="ECO:0007669"/>
    <property type="project" value="TreeGrafter"/>
</dbReference>
<dbReference type="Gene3D" id="3.40.1740.10">
    <property type="entry name" value="VC0467-like"/>
    <property type="match status" value="1"/>
</dbReference>
<dbReference type="HAMAP" id="MF_00758">
    <property type="entry name" value="UPF0301"/>
    <property type="match status" value="1"/>
</dbReference>
<dbReference type="InterPro" id="IPR003774">
    <property type="entry name" value="AlgH-like"/>
</dbReference>
<dbReference type="NCBIfam" id="NF001268">
    <property type="entry name" value="PRK00228.1-4"/>
    <property type="match status" value="1"/>
</dbReference>
<dbReference type="PANTHER" id="PTHR30327">
    <property type="entry name" value="UNCHARACTERIZED PROTEIN YQGE"/>
    <property type="match status" value="1"/>
</dbReference>
<dbReference type="PANTHER" id="PTHR30327:SF1">
    <property type="entry name" value="UPF0301 PROTEIN YQGE"/>
    <property type="match status" value="1"/>
</dbReference>
<dbReference type="Pfam" id="PF02622">
    <property type="entry name" value="DUF179"/>
    <property type="match status" value="1"/>
</dbReference>
<dbReference type="SUPFAM" id="SSF143456">
    <property type="entry name" value="VC0467-like"/>
    <property type="match status" value="1"/>
</dbReference>
<feature type="chain" id="PRO_0000214305" description="UPF0301 protein Atu0781">
    <location>
        <begin position="1"/>
        <end position="201"/>
    </location>
</feature>
<name>Y781_AGRFC</name>